<name>IXTPA_CHLAB</name>
<sequence>MKIVIASSHGYKIRETKTFLKQLGSFDIFSLTDFPNYYAPKEVGSLPEENALAKGLHAARELNSWVIADDTMLMVPALNGLPGKLSATFAGEDACDKDHRKKLLQEMQSLESIVDRSAYFECCIVLASPEGKFFKTRGICEGYISHQEKGSSGFGYDSLFLKYDYKQTFAELSEDIKNQVSHRAKALQKLAPYLQDLLEKQLVSRN</sequence>
<comment type="function">
    <text evidence="1">Pyrophosphatase that catalyzes the hydrolysis of nucleoside triphosphates to their monophosphate derivatives, with a high preference for the non-canonical purine nucleotides XTP (xanthosine triphosphate), dITP (deoxyinosine triphosphate) and ITP. Seems to function as a house-cleaning enzyme that removes non-canonical purine nucleotides from the nucleotide pool, thus preventing their incorporation into DNA/RNA and avoiding chromosomal lesions.</text>
</comment>
<comment type="catalytic activity">
    <reaction evidence="1">
        <text>XTP + H2O = XMP + diphosphate + H(+)</text>
        <dbReference type="Rhea" id="RHEA:28610"/>
        <dbReference type="ChEBI" id="CHEBI:15377"/>
        <dbReference type="ChEBI" id="CHEBI:15378"/>
        <dbReference type="ChEBI" id="CHEBI:33019"/>
        <dbReference type="ChEBI" id="CHEBI:57464"/>
        <dbReference type="ChEBI" id="CHEBI:61314"/>
        <dbReference type="EC" id="3.6.1.66"/>
    </reaction>
</comment>
<comment type="catalytic activity">
    <reaction evidence="1">
        <text>dITP + H2O = dIMP + diphosphate + H(+)</text>
        <dbReference type="Rhea" id="RHEA:28342"/>
        <dbReference type="ChEBI" id="CHEBI:15377"/>
        <dbReference type="ChEBI" id="CHEBI:15378"/>
        <dbReference type="ChEBI" id="CHEBI:33019"/>
        <dbReference type="ChEBI" id="CHEBI:61194"/>
        <dbReference type="ChEBI" id="CHEBI:61382"/>
        <dbReference type="EC" id="3.6.1.66"/>
    </reaction>
</comment>
<comment type="catalytic activity">
    <reaction evidence="1">
        <text>ITP + H2O = IMP + diphosphate + H(+)</text>
        <dbReference type="Rhea" id="RHEA:29399"/>
        <dbReference type="ChEBI" id="CHEBI:15377"/>
        <dbReference type="ChEBI" id="CHEBI:15378"/>
        <dbReference type="ChEBI" id="CHEBI:33019"/>
        <dbReference type="ChEBI" id="CHEBI:58053"/>
        <dbReference type="ChEBI" id="CHEBI:61402"/>
        <dbReference type="EC" id="3.6.1.66"/>
    </reaction>
</comment>
<comment type="cofactor">
    <cofactor evidence="1">
        <name>Mg(2+)</name>
        <dbReference type="ChEBI" id="CHEBI:18420"/>
    </cofactor>
    <text evidence="1">Binds 1 Mg(2+) ion per subunit.</text>
</comment>
<comment type="subunit">
    <text evidence="1">Homodimer.</text>
</comment>
<comment type="similarity">
    <text evidence="1">Belongs to the HAM1 NTPase family.</text>
</comment>
<protein>
    <recommendedName>
        <fullName evidence="1">dITP/XTP pyrophosphatase</fullName>
        <ecNumber evidence="1">3.6.1.66</ecNumber>
    </recommendedName>
    <alternativeName>
        <fullName evidence="1">Non-canonical purine NTP pyrophosphatase</fullName>
    </alternativeName>
    <alternativeName>
        <fullName evidence="1">Non-standard purine NTP pyrophosphatase</fullName>
    </alternativeName>
    <alternativeName>
        <fullName evidence="1">Nucleoside-triphosphate diphosphatase</fullName>
    </alternativeName>
    <alternativeName>
        <fullName evidence="1">Nucleoside-triphosphate pyrophosphatase</fullName>
        <shortName evidence="1">NTPase</shortName>
    </alternativeName>
</protein>
<organism>
    <name type="scientific">Chlamydia abortus (strain DSM 27085 / S26/3)</name>
    <name type="common">Chlamydophila abortus</name>
    <dbReference type="NCBI Taxonomy" id="218497"/>
    <lineage>
        <taxon>Bacteria</taxon>
        <taxon>Pseudomonadati</taxon>
        <taxon>Chlamydiota</taxon>
        <taxon>Chlamydiia</taxon>
        <taxon>Chlamydiales</taxon>
        <taxon>Chlamydiaceae</taxon>
        <taxon>Chlamydia/Chlamydophila group</taxon>
        <taxon>Chlamydia</taxon>
    </lineage>
</organism>
<proteinExistence type="inferred from homology"/>
<gene>
    <name type="ordered locus">CAB952</name>
</gene>
<feature type="chain" id="PRO_1000068415" description="dITP/XTP pyrophosphatase">
    <location>
        <begin position="1"/>
        <end position="206"/>
    </location>
</feature>
<feature type="active site" description="Proton acceptor" evidence="1">
    <location>
        <position position="70"/>
    </location>
</feature>
<feature type="binding site" evidence="1">
    <location>
        <begin position="7"/>
        <end position="12"/>
    </location>
    <ligand>
        <name>substrate</name>
    </ligand>
</feature>
<feature type="binding site" evidence="1">
    <location>
        <position position="70"/>
    </location>
    <ligand>
        <name>Mg(2+)</name>
        <dbReference type="ChEBI" id="CHEBI:18420"/>
    </ligand>
</feature>
<feature type="binding site" evidence="1">
    <location>
        <position position="71"/>
    </location>
    <ligand>
        <name>substrate</name>
    </ligand>
</feature>
<feature type="binding site" evidence="1">
    <location>
        <begin position="154"/>
        <end position="157"/>
    </location>
    <ligand>
        <name>substrate</name>
    </ligand>
</feature>
<feature type="binding site" evidence="1">
    <location>
        <position position="177"/>
    </location>
    <ligand>
        <name>substrate</name>
    </ligand>
</feature>
<feature type="binding site" evidence="1">
    <location>
        <begin position="182"/>
        <end position="183"/>
    </location>
    <ligand>
        <name>substrate</name>
    </ligand>
</feature>
<keyword id="KW-0378">Hydrolase</keyword>
<keyword id="KW-0460">Magnesium</keyword>
<keyword id="KW-0479">Metal-binding</keyword>
<keyword id="KW-0546">Nucleotide metabolism</keyword>
<keyword id="KW-0547">Nucleotide-binding</keyword>
<dbReference type="EC" id="3.6.1.66" evidence="1"/>
<dbReference type="EMBL" id="CR848038">
    <property type="protein sequence ID" value="CAH64390.1"/>
    <property type="molecule type" value="Genomic_DNA"/>
</dbReference>
<dbReference type="RefSeq" id="WP_011097445.1">
    <property type="nucleotide sequence ID" value="NC_004552.2"/>
</dbReference>
<dbReference type="SMR" id="Q5L4Q6"/>
<dbReference type="GeneID" id="93024509"/>
<dbReference type="KEGG" id="cab:CAB952"/>
<dbReference type="eggNOG" id="COG0127">
    <property type="taxonomic scope" value="Bacteria"/>
</dbReference>
<dbReference type="HOGENOM" id="CLU_082080_0_2_0"/>
<dbReference type="OrthoDB" id="9807456at2"/>
<dbReference type="Proteomes" id="UP000001012">
    <property type="component" value="Chromosome"/>
</dbReference>
<dbReference type="GO" id="GO:0005829">
    <property type="term" value="C:cytosol"/>
    <property type="evidence" value="ECO:0007669"/>
    <property type="project" value="TreeGrafter"/>
</dbReference>
<dbReference type="GO" id="GO:0035870">
    <property type="term" value="F:dITP diphosphatase activity"/>
    <property type="evidence" value="ECO:0007669"/>
    <property type="project" value="RHEA"/>
</dbReference>
<dbReference type="GO" id="GO:0036220">
    <property type="term" value="F:ITP diphosphatase activity"/>
    <property type="evidence" value="ECO:0007669"/>
    <property type="project" value="UniProtKB-EC"/>
</dbReference>
<dbReference type="GO" id="GO:0046872">
    <property type="term" value="F:metal ion binding"/>
    <property type="evidence" value="ECO:0007669"/>
    <property type="project" value="UniProtKB-KW"/>
</dbReference>
<dbReference type="GO" id="GO:0000166">
    <property type="term" value="F:nucleotide binding"/>
    <property type="evidence" value="ECO:0007669"/>
    <property type="project" value="UniProtKB-KW"/>
</dbReference>
<dbReference type="GO" id="GO:0017111">
    <property type="term" value="F:ribonucleoside triphosphate phosphatase activity"/>
    <property type="evidence" value="ECO:0007669"/>
    <property type="project" value="InterPro"/>
</dbReference>
<dbReference type="GO" id="GO:0036222">
    <property type="term" value="F:XTP diphosphatase activity"/>
    <property type="evidence" value="ECO:0007669"/>
    <property type="project" value="RHEA"/>
</dbReference>
<dbReference type="GO" id="GO:0009117">
    <property type="term" value="P:nucleotide metabolic process"/>
    <property type="evidence" value="ECO:0007669"/>
    <property type="project" value="UniProtKB-KW"/>
</dbReference>
<dbReference type="GO" id="GO:0009146">
    <property type="term" value="P:purine nucleoside triphosphate catabolic process"/>
    <property type="evidence" value="ECO:0007669"/>
    <property type="project" value="UniProtKB-UniRule"/>
</dbReference>
<dbReference type="CDD" id="cd00515">
    <property type="entry name" value="HAM1"/>
    <property type="match status" value="1"/>
</dbReference>
<dbReference type="FunFam" id="3.90.950.10:FF:000001">
    <property type="entry name" value="dITP/XTP pyrophosphatase"/>
    <property type="match status" value="1"/>
</dbReference>
<dbReference type="Gene3D" id="3.90.950.10">
    <property type="match status" value="1"/>
</dbReference>
<dbReference type="HAMAP" id="MF_01405">
    <property type="entry name" value="Non_canon_purine_NTPase"/>
    <property type="match status" value="1"/>
</dbReference>
<dbReference type="InterPro" id="IPR020922">
    <property type="entry name" value="dITP/XTP_pyrophosphatase"/>
</dbReference>
<dbReference type="InterPro" id="IPR029001">
    <property type="entry name" value="ITPase-like_fam"/>
</dbReference>
<dbReference type="InterPro" id="IPR002637">
    <property type="entry name" value="RdgB/HAM1"/>
</dbReference>
<dbReference type="NCBIfam" id="TIGR00042">
    <property type="entry name" value="RdgB/HAM1 family non-canonical purine NTP pyrophosphatase"/>
    <property type="match status" value="1"/>
</dbReference>
<dbReference type="PANTHER" id="PTHR11067:SF9">
    <property type="entry name" value="INOSINE TRIPHOSPHATE PYROPHOSPHATASE"/>
    <property type="match status" value="1"/>
</dbReference>
<dbReference type="PANTHER" id="PTHR11067">
    <property type="entry name" value="INOSINE TRIPHOSPHATE PYROPHOSPHATASE/HAM1 PROTEIN"/>
    <property type="match status" value="1"/>
</dbReference>
<dbReference type="Pfam" id="PF01725">
    <property type="entry name" value="Ham1p_like"/>
    <property type="match status" value="1"/>
</dbReference>
<dbReference type="SUPFAM" id="SSF52972">
    <property type="entry name" value="ITPase-like"/>
    <property type="match status" value="1"/>
</dbReference>
<accession>Q5L4Q6</accession>
<evidence type="ECO:0000255" key="1">
    <source>
        <dbReference type="HAMAP-Rule" id="MF_01405"/>
    </source>
</evidence>
<reference key="1">
    <citation type="journal article" date="2005" name="Genome Res.">
        <title>The Chlamydophila abortus genome sequence reveals an array of variable proteins that contribute to interspecies variation.</title>
        <authorList>
            <person name="Thomson N.R."/>
            <person name="Yeats C."/>
            <person name="Bell K."/>
            <person name="Holden M.T.G."/>
            <person name="Bentley S.D."/>
            <person name="Livingstone M."/>
            <person name="Cerdeno-Tarraga A.-M."/>
            <person name="Harris B."/>
            <person name="Doggett J."/>
            <person name="Ormond D."/>
            <person name="Mungall K."/>
            <person name="Clarke K."/>
            <person name="Feltwell T."/>
            <person name="Hance Z."/>
            <person name="Sanders M."/>
            <person name="Quail M.A."/>
            <person name="Price C."/>
            <person name="Barrell B.G."/>
            <person name="Parkhill J."/>
            <person name="Longbottom D."/>
        </authorList>
    </citation>
    <scope>NUCLEOTIDE SEQUENCE [LARGE SCALE GENOMIC DNA]</scope>
    <source>
        <strain>DSM 27085 / S26/3</strain>
    </source>
</reference>